<sequence>MATLLRVSSLCRANRASAFKSLLIRPVPCLTQDHHMVQTSQIHTSPNHHAGSKAASMHWTSERALSVALLGLLPAAYLYPGAAMDYSLAAALTLHGHWGLGQVVTDYVHGDAKIKMANTSLFALSALTFAGLCYFNYHDVGICKAVSMLWSL</sequence>
<protein>
    <recommendedName>
        <fullName>Succinate dehydrogenase [ubiquinone] cytochrome b small subunit, mitochondrial</fullName>
        <shortName>CybS</shortName>
    </recommendedName>
    <alternativeName>
        <fullName>Malate dehydrogenase [quinone] cytochrome b small subunit</fullName>
    </alternativeName>
    <alternativeName>
        <fullName>Succinate dehydrogenase complex subunit D</fullName>
    </alternativeName>
    <alternativeName>
        <fullName>Succinate-ubiquinone oxidoreductase cytochrome b small subunit</fullName>
    </alternativeName>
    <alternativeName>
        <fullName>Succinate-ubiquinone reductase membrane anchor subunit</fullName>
    </alternativeName>
</protein>
<feature type="transit peptide" description="Mitochondrion" evidence="3">
    <location>
        <begin position="1"/>
        <end position="21"/>
    </location>
</feature>
<feature type="chain" id="PRO_0000343810" description="Succinate dehydrogenase [ubiquinone] cytochrome b small subunit, mitochondrial">
    <location>
        <begin position="22"/>
        <end position="152"/>
    </location>
</feature>
<feature type="topological domain" description="Mitochondrial matrix" evidence="1">
    <location>
        <begin position="22"/>
        <end position="56"/>
    </location>
</feature>
<feature type="transmembrane region" description="Helical" evidence="1">
    <location>
        <begin position="57"/>
        <end position="78"/>
    </location>
</feature>
<feature type="topological domain" description="Mitochondrial intermembrane" evidence="1">
    <location>
        <begin position="79"/>
        <end position="83"/>
    </location>
</feature>
<feature type="transmembrane region" description="Helical" evidence="1">
    <location>
        <begin position="84"/>
        <end position="104"/>
    </location>
</feature>
<feature type="topological domain" description="Mitochondrial matrix" evidence="1">
    <location>
        <begin position="105"/>
        <end position="113"/>
    </location>
</feature>
<feature type="transmembrane region" description="Helical" evidence="1">
    <location>
        <begin position="114"/>
        <end position="135"/>
    </location>
</feature>
<feature type="topological domain" description="Mitochondrial intermembrane" evidence="1">
    <location>
        <begin position="136"/>
        <end position="152"/>
    </location>
</feature>
<feature type="binding site" description="axial binding residue" evidence="1">
    <location>
        <position position="95"/>
    </location>
    <ligand>
        <name>heme b</name>
        <dbReference type="ChEBI" id="CHEBI:60344"/>
        <note>ligand shared with SDHC</note>
    </ligand>
    <ligandPart>
        <name>Fe</name>
        <dbReference type="ChEBI" id="CHEBI:18248"/>
    </ligandPart>
</feature>
<feature type="binding site" evidence="1">
    <location>
        <position position="107"/>
    </location>
    <ligand>
        <name>a ubiquinone</name>
        <dbReference type="ChEBI" id="CHEBI:16389"/>
        <note>ligand shared with IP/SDHB</note>
    </ligand>
</feature>
<name>DHSD_XENTR</name>
<proteinExistence type="evidence at transcript level"/>
<keyword id="KW-0249">Electron transport</keyword>
<keyword id="KW-0349">Heme</keyword>
<keyword id="KW-0408">Iron</keyword>
<keyword id="KW-0472">Membrane</keyword>
<keyword id="KW-0479">Metal-binding</keyword>
<keyword id="KW-0496">Mitochondrion</keyword>
<keyword id="KW-0999">Mitochondrion inner membrane</keyword>
<keyword id="KW-1185">Reference proteome</keyword>
<keyword id="KW-0809">Transit peptide</keyword>
<keyword id="KW-0812">Transmembrane</keyword>
<keyword id="KW-1133">Transmembrane helix</keyword>
<keyword id="KW-0813">Transport</keyword>
<keyword id="KW-0816">Tricarboxylic acid cycle</keyword>
<dbReference type="EMBL" id="CR848414">
    <property type="protein sequence ID" value="CAJ82461.1"/>
    <property type="molecule type" value="mRNA"/>
</dbReference>
<dbReference type="EMBL" id="BC064178">
    <property type="protein sequence ID" value="AAH64178.1"/>
    <property type="molecule type" value="mRNA"/>
</dbReference>
<dbReference type="RefSeq" id="NP_989357.1">
    <property type="nucleotide sequence ID" value="NM_204026.1"/>
</dbReference>
<dbReference type="SMR" id="Q6P355"/>
<dbReference type="FunCoup" id="Q6P355">
    <property type="interactions" value="1490"/>
</dbReference>
<dbReference type="STRING" id="8364.ENSXETP00000012926"/>
<dbReference type="PaxDb" id="8364-ENSXETP00000057629"/>
<dbReference type="DNASU" id="394986"/>
<dbReference type="GeneID" id="394986"/>
<dbReference type="KEGG" id="xtr:394986"/>
<dbReference type="AGR" id="Xenbase:XB-GENE-5855162"/>
<dbReference type="CTD" id="6392"/>
<dbReference type="Xenbase" id="XB-GENE-5855162">
    <property type="gene designation" value="sdhd"/>
</dbReference>
<dbReference type="eggNOG" id="KOG4097">
    <property type="taxonomic scope" value="Eukaryota"/>
</dbReference>
<dbReference type="HOGENOM" id="CLU_096618_1_1_1"/>
<dbReference type="InParanoid" id="Q6P355"/>
<dbReference type="OMA" id="VMHQHWG"/>
<dbReference type="OrthoDB" id="18577at2759"/>
<dbReference type="PhylomeDB" id="Q6P355"/>
<dbReference type="TreeFam" id="TF313310"/>
<dbReference type="Reactome" id="R-XTR-71403">
    <property type="pathway name" value="Citric acid cycle (TCA cycle)"/>
</dbReference>
<dbReference type="Reactome" id="R-XTR-9854311">
    <property type="pathway name" value="Maturation of TCA enzymes and regulation of TCA cycle"/>
</dbReference>
<dbReference type="UniPathway" id="UPA00223"/>
<dbReference type="Proteomes" id="UP000008143">
    <property type="component" value="Chromosome 7"/>
</dbReference>
<dbReference type="Bgee" id="ENSXETG00000027683">
    <property type="expression patterns" value="Expressed in skeletal muscle tissue and 18 other cell types or tissues"/>
</dbReference>
<dbReference type="GO" id="GO:0005743">
    <property type="term" value="C:mitochondrial inner membrane"/>
    <property type="evidence" value="ECO:0000250"/>
    <property type="project" value="UniProtKB"/>
</dbReference>
<dbReference type="GO" id="GO:0045273">
    <property type="term" value="C:respiratory chain complex II (succinate dehydrogenase)"/>
    <property type="evidence" value="ECO:0000250"/>
    <property type="project" value="UniProtKB"/>
</dbReference>
<dbReference type="GO" id="GO:0020037">
    <property type="term" value="F:heme binding"/>
    <property type="evidence" value="ECO:0000250"/>
    <property type="project" value="UniProtKB"/>
</dbReference>
<dbReference type="GO" id="GO:0046872">
    <property type="term" value="F:metal ion binding"/>
    <property type="evidence" value="ECO:0007669"/>
    <property type="project" value="UniProtKB-KW"/>
</dbReference>
<dbReference type="GO" id="GO:0048039">
    <property type="term" value="F:ubiquinone binding"/>
    <property type="evidence" value="ECO:0000250"/>
    <property type="project" value="UniProtKB"/>
</dbReference>
<dbReference type="GO" id="GO:0006099">
    <property type="term" value="P:tricarboxylic acid cycle"/>
    <property type="evidence" value="ECO:0007669"/>
    <property type="project" value="UniProtKB-KW"/>
</dbReference>
<dbReference type="CDD" id="cd03496">
    <property type="entry name" value="SQR_TypeC_CybS"/>
    <property type="match status" value="1"/>
</dbReference>
<dbReference type="FunFam" id="1.20.1300.10:FF:000009">
    <property type="entry name" value="Succinate dehydrogenase [ubiquinone] cytochrome b small subunit, mitochondrial"/>
    <property type="match status" value="1"/>
</dbReference>
<dbReference type="Gene3D" id="1.20.1300.10">
    <property type="entry name" value="Fumarate reductase/succinate dehydrogenase, transmembrane subunit"/>
    <property type="match status" value="1"/>
</dbReference>
<dbReference type="InterPro" id="IPR007992">
    <property type="entry name" value="CybS"/>
</dbReference>
<dbReference type="InterPro" id="IPR034804">
    <property type="entry name" value="SQR/QFR_C/D"/>
</dbReference>
<dbReference type="PANTHER" id="PTHR13337">
    <property type="entry name" value="SUCCINATE DEHYDROGENASE"/>
    <property type="match status" value="1"/>
</dbReference>
<dbReference type="PANTHER" id="PTHR13337:SF2">
    <property type="entry name" value="SUCCINATE DEHYDROGENASE [UBIQUINONE] CYTOCHROME B SMALL SUBUNIT, MITOCHONDRIAL"/>
    <property type="match status" value="1"/>
</dbReference>
<dbReference type="Pfam" id="PF05328">
    <property type="entry name" value="CybS"/>
    <property type="match status" value="1"/>
</dbReference>
<dbReference type="SUPFAM" id="SSF81343">
    <property type="entry name" value="Fumarate reductase respiratory complex transmembrane subunits"/>
    <property type="match status" value="1"/>
</dbReference>
<accession>Q6P355</accession>
<comment type="function">
    <text evidence="1 2">Membrane-anchoring subunit of succinate dehydrogenase (SDH) that is involved in complex II of the mitochondrial electron transport chain and is responsible for transferring electrons from succinate to ubiquinone (coenzyme Q) (By similarity). SDH also oxidizes malate to the non-canonical enol form of oxaloacetate, enol-oxaloacetate. Enol-oxaloacetate, which is a potent inhibitor of the succinate dehydrogenase activity, is further isomerized into keto-oxaloacetate (By similarity).</text>
</comment>
<comment type="pathway">
    <text evidence="1">Carbohydrate metabolism; tricarboxylic acid cycle.</text>
</comment>
<comment type="subunit">
    <text evidence="1">Component of complex II composed of four subunits: the flavoprotein (FP) SDHA, iron-sulfur protein (IP) SDHB, and a cytochrome b560 composed of SDHC and SDHD.</text>
</comment>
<comment type="subcellular location">
    <subcellularLocation>
        <location evidence="1">Mitochondrion inner membrane</location>
        <topology evidence="3">Multi-pass membrane protein</topology>
    </subcellularLocation>
</comment>
<comment type="similarity">
    <text evidence="4">Belongs to the CybS family.</text>
</comment>
<evidence type="ECO:0000250" key="1">
    <source>
        <dbReference type="UniProtKB" id="O14521"/>
    </source>
</evidence>
<evidence type="ECO:0000250" key="2">
    <source>
        <dbReference type="UniProtKB" id="Q95123"/>
    </source>
</evidence>
<evidence type="ECO:0000255" key="3"/>
<evidence type="ECO:0000305" key="4"/>
<gene>
    <name type="primary">sdhd</name>
    <name type="ORF">TNeu097k19.1</name>
</gene>
<organism>
    <name type="scientific">Xenopus tropicalis</name>
    <name type="common">Western clawed frog</name>
    <name type="synonym">Silurana tropicalis</name>
    <dbReference type="NCBI Taxonomy" id="8364"/>
    <lineage>
        <taxon>Eukaryota</taxon>
        <taxon>Metazoa</taxon>
        <taxon>Chordata</taxon>
        <taxon>Craniata</taxon>
        <taxon>Vertebrata</taxon>
        <taxon>Euteleostomi</taxon>
        <taxon>Amphibia</taxon>
        <taxon>Batrachia</taxon>
        <taxon>Anura</taxon>
        <taxon>Pipoidea</taxon>
        <taxon>Pipidae</taxon>
        <taxon>Xenopodinae</taxon>
        <taxon>Xenopus</taxon>
        <taxon>Silurana</taxon>
    </lineage>
</organism>
<reference key="1">
    <citation type="submission" date="2006-10" db="EMBL/GenBank/DDBJ databases">
        <authorList>
            <consortium name="Sanger Xenopus tropicalis EST/cDNA project"/>
        </authorList>
    </citation>
    <scope>NUCLEOTIDE SEQUENCE [LARGE SCALE MRNA]</scope>
    <source>
        <tissue>Neurula</tissue>
    </source>
</reference>
<reference key="2">
    <citation type="submission" date="2003-12" db="EMBL/GenBank/DDBJ databases">
        <authorList>
            <consortium name="NIH - Xenopus Gene Collection (XGC) project"/>
        </authorList>
    </citation>
    <scope>NUCLEOTIDE SEQUENCE [LARGE SCALE MRNA]</scope>
    <source>
        <tissue>Embryo</tissue>
    </source>
</reference>